<reference key="1">
    <citation type="journal article" date="2007" name="Nat. Biotechnol.">
        <title>Complete genome sequence of the erythromycin-producing bacterium Saccharopolyspora erythraea NRRL23338.</title>
        <authorList>
            <person name="Oliynyk M."/>
            <person name="Samborskyy M."/>
            <person name="Lester J.B."/>
            <person name="Mironenko T."/>
            <person name="Scott N."/>
            <person name="Dickens S."/>
            <person name="Haydock S.F."/>
            <person name="Leadlay P.F."/>
        </authorList>
    </citation>
    <scope>NUCLEOTIDE SEQUENCE [LARGE SCALE GENOMIC DNA]</scope>
    <source>
        <strain>ATCC 11635 / DSM 40517 / JCM 4748 / NBRC 13426 / NCIMB 8594 / NRRL 2338</strain>
    </source>
</reference>
<name>HIS1_SACEN</name>
<comment type="function">
    <text evidence="1">Catalyzes the condensation of ATP and 5-phosphoribose 1-diphosphate to form N'-(5'-phosphoribosyl)-ATP (PR-ATP). Has a crucial role in the pathway because the rate of histidine biosynthesis seems to be controlled primarily by regulation of HisG enzymatic activity.</text>
</comment>
<comment type="catalytic activity">
    <reaction evidence="1">
        <text>1-(5-phospho-beta-D-ribosyl)-ATP + diphosphate = 5-phospho-alpha-D-ribose 1-diphosphate + ATP</text>
        <dbReference type="Rhea" id="RHEA:18473"/>
        <dbReference type="ChEBI" id="CHEBI:30616"/>
        <dbReference type="ChEBI" id="CHEBI:33019"/>
        <dbReference type="ChEBI" id="CHEBI:58017"/>
        <dbReference type="ChEBI" id="CHEBI:73183"/>
        <dbReference type="EC" id="2.4.2.17"/>
    </reaction>
</comment>
<comment type="cofactor">
    <cofactor evidence="1">
        <name>Mg(2+)</name>
        <dbReference type="ChEBI" id="CHEBI:18420"/>
    </cofactor>
</comment>
<comment type="activity regulation">
    <text evidence="1">Feedback inhibited by histidine.</text>
</comment>
<comment type="pathway">
    <text evidence="1">Amino-acid biosynthesis; L-histidine biosynthesis; L-histidine from 5-phospho-alpha-D-ribose 1-diphosphate: step 1/9.</text>
</comment>
<comment type="subcellular location">
    <subcellularLocation>
        <location evidence="1">Cytoplasm</location>
    </subcellularLocation>
</comment>
<comment type="similarity">
    <text evidence="1">Belongs to the ATP phosphoribosyltransferase family. Long subfamily.</text>
</comment>
<gene>
    <name evidence="1" type="primary">hisG</name>
    <name type="ordered locus">SACE_2238</name>
</gene>
<evidence type="ECO:0000255" key="1">
    <source>
        <dbReference type="HAMAP-Rule" id="MF_00079"/>
    </source>
</evidence>
<keyword id="KW-0028">Amino-acid biosynthesis</keyword>
<keyword id="KW-0067">ATP-binding</keyword>
<keyword id="KW-0963">Cytoplasm</keyword>
<keyword id="KW-0328">Glycosyltransferase</keyword>
<keyword id="KW-0368">Histidine biosynthesis</keyword>
<keyword id="KW-0460">Magnesium</keyword>
<keyword id="KW-0479">Metal-binding</keyword>
<keyword id="KW-0547">Nucleotide-binding</keyword>
<keyword id="KW-1185">Reference proteome</keyword>
<keyword id="KW-0808">Transferase</keyword>
<feature type="chain" id="PRO_1000004495" description="ATP phosphoribosyltransferase">
    <location>
        <begin position="1"/>
        <end position="282"/>
    </location>
</feature>
<sequence>MLRVAVPNKGTLAGPASEMLAEAGYRQRHEQRDLTVLDPVNDVEFFFLRPKDIAIYVGSGELDLGITGRDLALDSGSPVDERLALGFGGSNFRYAAPAEAGEWSVGDLAGRRIATSYPRLVTDDLARYGVSADVIRLDGAVEISIQLGVADAIADVVGSGRTLRQHSLVAFGEPICSSEAVVIERRGSDQQEAKDRLVARLQGVVFAQQYVMLDYNCPRDLLDEAAKLTPGLGSPTMSPLADEKWVAVRAMVSRKEAPAIMDRLADFGAKAILSSDIRSCRM</sequence>
<proteinExistence type="inferred from homology"/>
<dbReference type="EC" id="2.4.2.17" evidence="1"/>
<dbReference type="EMBL" id="AM420293">
    <property type="protein sequence ID" value="CAM01543.1"/>
    <property type="molecule type" value="Genomic_DNA"/>
</dbReference>
<dbReference type="RefSeq" id="WP_009945882.1">
    <property type="nucleotide sequence ID" value="NC_009142.1"/>
</dbReference>
<dbReference type="SMR" id="A4FBW8"/>
<dbReference type="STRING" id="405948.SACE_2238"/>
<dbReference type="KEGG" id="sen:SACE_2238"/>
<dbReference type="eggNOG" id="COG0040">
    <property type="taxonomic scope" value="Bacteria"/>
</dbReference>
<dbReference type="HOGENOM" id="CLU_038115_1_1_11"/>
<dbReference type="OrthoDB" id="9801867at2"/>
<dbReference type="UniPathway" id="UPA00031">
    <property type="reaction ID" value="UER00006"/>
</dbReference>
<dbReference type="Proteomes" id="UP000006728">
    <property type="component" value="Chromosome"/>
</dbReference>
<dbReference type="GO" id="GO:0005737">
    <property type="term" value="C:cytoplasm"/>
    <property type="evidence" value="ECO:0007669"/>
    <property type="project" value="UniProtKB-SubCell"/>
</dbReference>
<dbReference type="GO" id="GO:0005524">
    <property type="term" value="F:ATP binding"/>
    <property type="evidence" value="ECO:0007669"/>
    <property type="project" value="UniProtKB-KW"/>
</dbReference>
<dbReference type="GO" id="GO:0003879">
    <property type="term" value="F:ATP phosphoribosyltransferase activity"/>
    <property type="evidence" value="ECO:0007669"/>
    <property type="project" value="UniProtKB-UniRule"/>
</dbReference>
<dbReference type="GO" id="GO:0000287">
    <property type="term" value="F:magnesium ion binding"/>
    <property type="evidence" value="ECO:0007669"/>
    <property type="project" value="UniProtKB-UniRule"/>
</dbReference>
<dbReference type="GO" id="GO:0000105">
    <property type="term" value="P:L-histidine biosynthetic process"/>
    <property type="evidence" value="ECO:0007669"/>
    <property type="project" value="UniProtKB-UniRule"/>
</dbReference>
<dbReference type="CDD" id="cd13591">
    <property type="entry name" value="PBP2_HisGL1"/>
    <property type="match status" value="1"/>
</dbReference>
<dbReference type="FunFam" id="3.30.70.120:FF:000003">
    <property type="entry name" value="ATP phosphoribosyltransferase"/>
    <property type="match status" value="1"/>
</dbReference>
<dbReference type="Gene3D" id="3.30.70.120">
    <property type="match status" value="1"/>
</dbReference>
<dbReference type="Gene3D" id="3.40.190.10">
    <property type="entry name" value="Periplasmic binding protein-like II"/>
    <property type="match status" value="2"/>
</dbReference>
<dbReference type="HAMAP" id="MF_00079">
    <property type="entry name" value="HisG_Long"/>
    <property type="match status" value="1"/>
</dbReference>
<dbReference type="InterPro" id="IPR020621">
    <property type="entry name" value="ATP-PRT_HisG_long"/>
</dbReference>
<dbReference type="InterPro" id="IPR013820">
    <property type="entry name" value="ATP_PRibTrfase_cat"/>
</dbReference>
<dbReference type="InterPro" id="IPR018198">
    <property type="entry name" value="ATP_PRibTrfase_CS"/>
</dbReference>
<dbReference type="InterPro" id="IPR001348">
    <property type="entry name" value="ATP_PRibTrfase_HisG"/>
</dbReference>
<dbReference type="InterPro" id="IPR013115">
    <property type="entry name" value="HisG_C"/>
</dbReference>
<dbReference type="InterPro" id="IPR011322">
    <property type="entry name" value="N-reg_PII-like_a/b"/>
</dbReference>
<dbReference type="InterPro" id="IPR015867">
    <property type="entry name" value="N-reg_PII/ATP_PRibTrfase_C"/>
</dbReference>
<dbReference type="NCBIfam" id="TIGR00070">
    <property type="entry name" value="hisG"/>
    <property type="match status" value="1"/>
</dbReference>
<dbReference type="NCBIfam" id="TIGR03455">
    <property type="entry name" value="HisG_C-term"/>
    <property type="match status" value="1"/>
</dbReference>
<dbReference type="PANTHER" id="PTHR21403:SF8">
    <property type="entry name" value="ATP PHOSPHORIBOSYLTRANSFERASE"/>
    <property type="match status" value="1"/>
</dbReference>
<dbReference type="PANTHER" id="PTHR21403">
    <property type="entry name" value="ATP PHOSPHORIBOSYLTRANSFERASE ATP-PRTASE"/>
    <property type="match status" value="1"/>
</dbReference>
<dbReference type="Pfam" id="PF01634">
    <property type="entry name" value="HisG"/>
    <property type="match status" value="1"/>
</dbReference>
<dbReference type="Pfam" id="PF08029">
    <property type="entry name" value="HisG_C"/>
    <property type="match status" value="1"/>
</dbReference>
<dbReference type="SUPFAM" id="SSF54913">
    <property type="entry name" value="GlnB-like"/>
    <property type="match status" value="1"/>
</dbReference>
<dbReference type="SUPFAM" id="SSF53850">
    <property type="entry name" value="Periplasmic binding protein-like II"/>
    <property type="match status" value="1"/>
</dbReference>
<dbReference type="PROSITE" id="PS01316">
    <property type="entry name" value="ATP_P_PHORIBOSYLTR"/>
    <property type="match status" value="1"/>
</dbReference>
<protein>
    <recommendedName>
        <fullName evidence="1">ATP phosphoribosyltransferase</fullName>
        <shortName evidence="1">ATP-PRT</shortName>
        <shortName evidence="1">ATP-PRTase</shortName>
        <ecNumber evidence="1">2.4.2.17</ecNumber>
    </recommendedName>
</protein>
<accession>A4FBW8</accession>
<organism>
    <name type="scientific">Saccharopolyspora erythraea (strain ATCC 11635 / DSM 40517 / JCM 4748 / NBRC 13426 / NCIMB 8594 / NRRL 2338)</name>
    <dbReference type="NCBI Taxonomy" id="405948"/>
    <lineage>
        <taxon>Bacteria</taxon>
        <taxon>Bacillati</taxon>
        <taxon>Actinomycetota</taxon>
        <taxon>Actinomycetes</taxon>
        <taxon>Pseudonocardiales</taxon>
        <taxon>Pseudonocardiaceae</taxon>
        <taxon>Saccharopolyspora</taxon>
    </lineage>
</organism>